<dbReference type="EC" id="2.3.1.-" evidence="1"/>
<dbReference type="EMBL" id="BC079998">
    <property type="protein sequence ID" value="AAH79998.1"/>
    <property type="molecule type" value="mRNA"/>
</dbReference>
<dbReference type="RefSeq" id="NP_001087484.1">
    <property type="nucleotide sequence ID" value="NM_001094015.1"/>
</dbReference>
<dbReference type="RefSeq" id="XP_018096490.1">
    <property type="nucleotide sequence ID" value="XM_018241001.1"/>
</dbReference>
<dbReference type="SMR" id="Q68F47"/>
<dbReference type="DNASU" id="447308"/>
<dbReference type="GeneID" id="447308"/>
<dbReference type="KEGG" id="xla:447308"/>
<dbReference type="AGR" id="Xenbase:XB-GENE-17344623"/>
<dbReference type="CTD" id="447308"/>
<dbReference type="Xenbase" id="XB-GENE-17344623">
    <property type="gene designation" value="sirt5.S"/>
</dbReference>
<dbReference type="OrthoDB" id="424302at2759"/>
<dbReference type="Proteomes" id="UP000186698">
    <property type="component" value="Chromosome 6S"/>
</dbReference>
<dbReference type="Bgee" id="447308">
    <property type="expression patterns" value="Expressed in muscle tissue and 19 other cell types or tissues"/>
</dbReference>
<dbReference type="GO" id="GO:0005829">
    <property type="term" value="C:cytosol"/>
    <property type="evidence" value="ECO:0000250"/>
    <property type="project" value="UniProtKB"/>
</dbReference>
<dbReference type="GO" id="GO:0005759">
    <property type="term" value="C:mitochondrial matrix"/>
    <property type="evidence" value="ECO:0000318"/>
    <property type="project" value="GO_Central"/>
</dbReference>
<dbReference type="GO" id="GO:0005739">
    <property type="term" value="C:mitochondrion"/>
    <property type="evidence" value="ECO:0000250"/>
    <property type="project" value="UniProtKB"/>
</dbReference>
<dbReference type="GO" id="GO:0005634">
    <property type="term" value="C:nucleus"/>
    <property type="evidence" value="ECO:0000318"/>
    <property type="project" value="GO_Central"/>
</dbReference>
<dbReference type="GO" id="GO:0017136">
    <property type="term" value="F:histone deacetylase activity, NAD-dependent"/>
    <property type="evidence" value="ECO:0000318"/>
    <property type="project" value="GO_Central"/>
</dbReference>
<dbReference type="GO" id="GO:0070403">
    <property type="term" value="F:NAD+ binding"/>
    <property type="evidence" value="ECO:0000250"/>
    <property type="project" value="UniProtKB"/>
</dbReference>
<dbReference type="GO" id="GO:0061697">
    <property type="term" value="F:protein-glutaryllysine deglutarylase activity"/>
    <property type="evidence" value="ECO:0000318"/>
    <property type="project" value="GO_Central"/>
</dbReference>
<dbReference type="GO" id="GO:0036054">
    <property type="term" value="F:protein-malonyllysine demalonylase activity"/>
    <property type="evidence" value="ECO:0000250"/>
    <property type="project" value="UniProtKB"/>
</dbReference>
<dbReference type="GO" id="GO:0036055">
    <property type="term" value="F:protein-succinyllysine desuccinylase activity"/>
    <property type="evidence" value="ECO:0000250"/>
    <property type="project" value="UniProtKB"/>
</dbReference>
<dbReference type="GO" id="GO:0008270">
    <property type="term" value="F:zinc ion binding"/>
    <property type="evidence" value="ECO:0000250"/>
    <property type="project" value="UniProtKB"/>
</dbReference>
<dbReference type="GO" id="GO:0036047">
    <property type="term" value="P:peptidyl-lysine demalonylation"/>
    <property type="evidence" value="ECO:0000250"/>
    <property type="project" value="UniProtKB"/>
</dbReference>
<dbReference type="GO" id="GO:0036049">
    <property type="term" value="P:peptidyl-lysine desuccinylation"/>
    <property type="evidence" value="ECO:0000250"/>
    <property type="project" value="UniProtKB"/>
</dbReference>
<dbReference type="GO" id="GO:0036048">
    <property type="term" value="P:protein desuccinylation"/>
    <property type="evidence" value="ECO:0000250"/>
    <property type="project" value="UniProtKB"/>
</dbReference>
<dbReference type="CDD" id="cd01412">
    <property type="entry name" value="SIRT5_Af1_CobB"/>
    <property type="match status" value="1"/>
</dbReference>
<dbReference type="FunFam" id="3.30.1600.10:FF:000005">
    <property type="entry name" value="NAD-dependent protein deacylase sirtuin-5, mitochondrial"/>
    <property type="match status" value="1"/>
</dbReference>
<dbReference type="Gene3D" id="3.30.1600.10">
    <property type="entry name" value="SIR2/SIRT2 'Small Domain"/>
    <property type="match status" value="1"/>
</dbReference>
<dbReference type="Gene3D" id="3.40.50.1220">
    <property type="entry name" value="TPP-binding domain"/>
    <property type="match status" value="1"/>
</dbReference>
<dbReference type="HAMAP" id="MF_01121">
    <property type="entry name" value="Sirtuin_ClassIII"/>
    <property type="match status" value="1"/>
</dbReference>
<dbReference type="InterPro" id="IPR029035">
    <property type="entry name" value="DHS-like_NAD/FAD-binding_dom"/>
</dbReference>
<dbReference type="InterPro" id="IPR050134">
    <property type="entry name" value="NAD-dep_sirtuin_deacylases"/>
</dbReference>
<dbReference type="InterPro" id="IPR003000">
    <property type="entry name" value="Sirtuin"/>
</dbReference>
<dbReference type="InterPro" id="IPR026591">
    <property type="entry name" value="Sirtuin_cat_small_dom_sf"/>
</dbReference>
<dbReference type="InterPro" id="IPR027546">
    <property type="entry name" value="Sirtuin_class_III"/>
</dbReference>
<dbReference type="InterPro" id="IPR026590">
    <property type="entry name" value="Ssirtuin_cat_dom"/>
</dbReference>
<dbReference type="PANTHER" id="PTHR11085">
    <property type="entry name" value="NAD-DEPENDENT PROTEIN DEACYLASE SIRTUIN-5, MITOCHONDRIAL-RELATED"/>
    <property type="match status" value="1"/>
</dbReference>
<dbReference type="PANTHER" id="PTHR11085:SF10">
    <property type="entry name" value="NAD-DEPENDENT PROTEIN DEACYLASE SIRTUIN-5, MITOCHONDRIAL-RELATED"/>
    <property type="match status" value="1"/>
</dbReference>
<dbReference type="Pfam" id="PF02146">
    <property type="entry name" value="SIR2"/>
    <property type="match status" value="1"/>
</dbReference>
<dbReference type="SUPFAM" id="SSF52467">
    <property type="entry name" value="DHS-like NAD/FAD-binding domain"/>
    <property type="match status" value="1"/>
</dbReference>
<dbReference type="PROSITE" id="PS50305">
    <property type="entry name" value="SIRTUIN"/>
    <property type="match status" value="1"/>
</dbReference>
<gene>
    <name type="primary">sirt5-b</name>
</gene>
<evidence type="ECO:0000255" key="1">
    <source>
        <dbReference type="HAMAP-Rule" id="MF_03160"/>
    </source>
</evidence>
<evidence type="ECO:0000255" key="2">
    <source>
        <dbReference type="PROSITE-ProRule" id="PRU00236"/>
    </source>
</evidence>
<protein>
    <recommendedName>
        <fullName evidence="1">NAD-dependent protein deacylase sirtuin-5B, mitochondrial</fullName>
        <ecNumber evidence="1">2.3.1.-</ecNumber>
    </recommendedName>
    <alternativeName>
        <fullName evidence="1">Regulatory protein SIR2 homolog 5-b</fullName>
    </alternativeName>
</protein>
<sequence length="309" mass="33958">MILLPFHTRRLVSHVYCGLKPASQNKGIALEMTRPSSNLANFREAFAKAKHIAVITGAGVSAESGVPTIIGAGGYWRKWQAQHLATPEAFSRNPSRVWEFYHYRREVMLTKNPNPAHLAIAECETRLRKQGRKVVVITQNIDELHHKAGSRNLFEIHGSLFKTRCTSCGSVKENYKSPICSALAGKGAPESDVQDAKIPVEKLPRCEENGCNGLLRPNVVWFGETLDSNLLGEVEKELEMCDLCVVVGTSSVVYPAAMFAPQVAARGVPVAEFNMENTSATTTFKFHFQGPCGTTLPPALARHETELIS</sequence>
<reference key="1">
    <citation type="submission" date="2004-08" db="EMBL/GenBank/DDBJ databases">
        <authorList>
            <consortium name="NIH - Xenopus Gene Collection (XGC) project"/>
        </authorList>
    </citation>
    <scope>NUCLEOTIDE SEQUENCE [LARGE SCALE MRNA]</scope>
    <source>
        <tissue>Embryo</tissue>
    </source>
</reference>
<comment type="function">
    <text evidence="1">NAD-dependent lysine demalonylase, desuccinylase and deglutarylase that specifically removes malonyl, succinyl and glutaryl groups on target proteins. Has weak NAD-dependent protein deacetylase activity; however this activity may not be physiologically relevant in vivo.</text>
</comment>
<comment type="catalytic activity">
    <reaction evidence="1">
        <text>N(6)-malonyl-L-lysyl-[protein] + NAD(+) + H2O = 2''-O-malonyl-ADP-D-ribose + nicotinamide + L-lysyl-[protein]</text>
        <dbReference type="Rhea" id="RHEA:47672"/>
        <dbReference type="Rhea" id="RHEA-COMP:9752"/>
        <dbReference type="Rhea" id="RHEA-COMP:11878"/>
        <dbReference type="ChEBI" id="CHEBI:15377"/>
        <dbReference type="ChEBI" id="CHEBI:17154"/>
        <dbReference type="ChEBI" id="CHEBI:29969"/>
        <dbReference type="ChEBI" id="CHEBI:57540"/>
        <dbReference type="ChEBI" id="CHEBI:87831"/>
        <dbReference type="ChEBI" id="CHEBI:87833"/>
    </reaction>
</comment>
<comment type="catalytic activity">
    <reaction evidence="1">
        <text>N(6)-succinyl-L-lysyl-[protein] + NAD(+) + H2O = 2''-O-succinyl-ADP-D-ribose + nicotinamide + L-lysyl-[protein]</text>
        <dbReference type="Rhea" id="RHEA:47668"/>
        <dbReference type="Rhea" id="RHEA-COMP:9752"/>
        <dbReference type="Rhea" id="RHEA-COMP:11877"/>
        <dbReference type="ChEBI" id="CHEBI:15377"/>
        <dbReference type="ChEBI" id="CHEBI:17154"/>
        <dbReference type="ChEBI" id="CHEBI:29969"/>
        <dbReference type="ChEBI" id="CHEBI:57540"/>
        <dbReference type="ChEBI" id="CHEBI:87830"/>
        <dbReference type="ChEBI" id="CHEBI:87832"/>
    </reaction>
</comment>
<comment type="catalytic activity">
    <reaction evidence="1">
        <text>N(6)-glutaryl-L-lysyl-[protein] + NAD(+) + H2O = 2''-O-glutaryl-ADP-D-ribose + nicotinamide + L-lysyl-[protein]</text>
        <dbReference type="Rhea" id="RHEA:47664"/>
        <dbReference type="Rhea" id="RHEA-COMP:9752"/>
        <dbReference type="Rhea" id="RHEA-COMP:11875"/>
        <dbReference type="ChEBI" id="CHEBI:15377"/>
        <dbReference type="ChEBI" id="CHEBI:17154"/>
        <dbReference type="ChEBI" id="CHEBI:29969"/>
        <dbReference type="ChEBI" id="CHEBI:57540"/>
        <dbReference type="ChEBI" id="CHEBI:87828"/>
        <dbReference type="ChEBI" id="CHEBI:87829"/>
    </reaction>
</comment>
<comment type="cofactor">
    <cofactor evidence="1">
        <name>Zn(2+)</name>
        <dbReference type="ChEBI" id="CHEBI:29105"/>
    </cofactor>
    <text evidence="1">Binds 1 zinc ion per subunit.</text>
</comment>
<comment type="subcellular location">
    <subcellularLocation>
        <location evidence="1">Mitochondrion</location>
    </subcellularLocation>
    <subcellularLocation>
        <location evidence="1">Cytoplasm</location>
        <location evidence="1">Cytosol</location>
    </subcellularLocation>
    <subcellularLocation>
        <location evidence="1">Nucleus</location>
    </subcellularLocation>
    <text evidence="1">Mainly mitochondrial. Also present extramitochondrially, with a fraction present in the cytosol and very small amounts also detected in the nucleus.</text>
</comment>
<comment type="domain">
    <text evidence="1">In contrast to class I sirtuins, class III sirtuins have only weak deacetylase activity. Difference in substrate specificity is probably due to a larger hydrophobic pocket with 2 residues (Tyr-101 and Arg-104) that bind to malonylated and succinylated substrates and define the specificity.</text>
</comment>
<comment type="similarity">
    <text evidence="1">Belongs to the sirtuin family. Class III subfamily.</text>
</comment>
<proteinExistence type="evidence at transcript level"/>
<accession>Q68F47</accession>
<keyword id="KW-0963">Cytoplasm</keyword>
<keyword id="KW-0479">Metal-binding</keyword>
<keyword id="KW-0496">Mitochondrion</keyword>
<keyword id="KW-0520">NAD</keyword>
<keyword id="KW-0539">Nucleus</keyword>
<keyword id="KW-1185">Reference proteome</keyword>
<keyword id="KW-0808">Transferase</keyword>
<keyword id="KW-0809">Transit peptide</keyword>
<keyword id="KW-0862">Zinc</keyword>
<name>SIR5B_XENLA</name>
<organism>
    <name type="scientific">Xenopus laevis</name>
    <name type="common">African clawed frog</name>
    <dbReference type="NCBI Taxonomy" id="8355"/>
    <lineage>
        <taxon>Eukaryota</taxon>
        <taxon>Metazoa</taxon>
        <taxon>Chordata</taxon>
        <taxon>Craniata</taxon>
        <taxon>Vertebrata</taxon>
        <taxon>Euteleostomi</taxon>
        <taxon>Amphibia</taxon>
        <taxon>Batrachia</taxon>
        <taxon>Anura</taxon>
        <taxon>Pipoidea</taxon>
        <taxon>Pipidae</taxon>
        <taxon>Xenopodinae</taxon>
        <taxon>Xenopus</taxon>
        <taxon>Xenopus</taxon>
    </lineage>
</organism>
<feature type="transit peptide" description="Mitochondrion" evidence="1">
    <location>
        <begin position="1"/>
        <end position="35"/>
    </location>
</feature>
<feature type="chain" id="PRO_0000415575" description="NAD-dependent protein deacylase sirtuin-5B, mitochondrial">
    <location>
        <begin position="36"/>
        <end position="309"/>
    </location>
</feature>
<feature type="domain" description="Deacetylase sirtuin-type" evidence="2">
    <location>
        <begin position="36"/>
        <end position="306"/>
    </location>
</feature>
<feature type="active site" description="Proton acceptor" evidence="2">
    <location>
        <position position="157"/>
    </location>
</feature>
<feature type="binding site" evidence="1">
    <location>
        <begin position="57"/>
        <end position="76"/>
    </location>
    <ligand>
        <name>NAD(+)</name>
        <dbReference type="ChEBI" id="CHEBI:57540"/>
    </ligand>
</feature>
<feature type="binding site" evidence="1">
    <location>
        <position position="101"/>
    </location>
    <ligand>
        <name>substrate</name>
    </ligand>
</feature>
<feature type="binding site" evidence="1">
    <location>
        <position position="104"/>
    </location>
    <ligand>
        <name>substrate</name>
    </ligand>
</feature>
<feature type="binding site" evidence="1">
    <location>
        <begin position="139"/>
        <end position="142"/>
    </location>
    <ligand>
        <name>NAD(+)</name>
        <dbReference type="ChEBI" id="CHEBI:57540"/>
    </ligand>
</feature>
<feature type="binding site" evidence="1">
    <location>
        <position position="165"/>
    </location>
    <ligand>
        <name>Zn(2+)</name>
        <dbReference type="ChEBI" id="CHEBI:29105"/>
    </ligand>
</feature>
<feature type="binding site" evidence="1">
    <location>
        <position position="168"/>
    </location>
    <ligand>
        <name>Zn(2+)</name>
        <dbReference type="ChEBI" id="CHEBI:29105"/>
    </ligand>
</feature>
<feature type="binding site" evidence="1">
    <location>
        <position position="206"/>
    </location>
    <ligand>
        <name>Zn(2+)</name>
        <dbReference type="ChEBI" id="CHEBI:29105"/>
    </ligand>
</feature>
<feature type="binding site" evidence="1">
    <location>
        <position position="211"/>
    </location>
    <ligand>
        <name>Zn(2+)</name>
        <dbReference type="ChEBI" id="CHEBI:29105"/>
    </ligand>
</feature>
<feature type="binding site" evidence="1">
    <location>
        <begin position="248"/>
        <end position="250"/>
    </location>
    <ligand>
        <name>NAD(+)</name>
        <dbReference type="ChEBI" id="CHEBI:57540"/>
    </ligand>
</feature>
<feature type="binding site" evidence="1">
    <location>
        <begin position="274"/>
        <end position="276"/>
    </location>
    <ligand>
        <name>NAD(+)</name>
        <dbReference type="ChEBI" id="CHEBI:57540"/>
    </ligand>
</feature>
<feature type="binding site" evidence="1">
    <location>
        <position position="292"/>
    </location>
    <ligand>
        <name>NAD(+)</name>
        <dbReference type="ChEBI" id="CHEBI:57540"/>
    </ligand>
</feature>